<keyword id="KW-0028">Amino-acid biosynthesis</keyword>
<keyword id="KW-0368">Histidine biosynthesis</keyword>
<keyword id="KW-0378">Hydrolase</keyword>
<keyword id="KW-0486">Methionine biosynthesis</keyword>
<keyword id="KW-0511">Multifunctional enzyme</keyword>
<keyword id="KW-0521">NADP</keyword>
<keyword id="KW-0554">One-carbon metabolism</keyword>
<keyword id="KW-0560">Oxidoreductase</keyword>
<keyword id="KW-0658">Purine biosynthesis</keyword>
<keyword id="KW-1185">Reference proteome</keyword>
<name>FOLD1_DESHY</name>
<comment type="function">
    <text evidence="1">Catalyzes the oxidation of 5,10-methylenetetrahydrofolate to 5,10-methenyltetrahydrofolate and then the hydrolysis of 5,10-methenyltetrahydrofolate to 10-formyltetrahydrofolate.</text>
</comment>
<comment type="catalytic activity">
    <reaction evidence="1">
        <text>(6R)-5,10-methylene-5,6,7,8-tetrahydrofolate + NADP(+) = (6R)-5,10-methenyltetrahydrofolate + NADPH</text>
        <dbReference type="Rhea" id="RHEA:22812"/>
        <dbReference type="ChEBI" id="CHEBI:15636"/>
        <dbReference type="ChEBI" id="CHEBI:57455"/>
        <dbReference type="ChEBI" id="CHEBI:57783"/>
        <dbReference type="ChEBI" id="CHEBI:58349"/>
        <dbReference type="EC" id="1.5.1.5"/>
    </reaction>
</comment>
<comment type="catalytic activity">
    <reaction evidence="1">
        <text>(6R)-5,10-methenyltetrahydrofolate + H2O = (6R)-10-formyltetrahydrofolate + H(+)</text>
        <dbReference type="Rhea" id="RHEA:23700"/>
        <dbReference type="ChEBI" id="CHEBI:15377"/>
        <dbReference type="ChEBI" id="CHEBI:15378"/>
        <dbReference type="ChEBI" id="CHEBI:57455"/>
        <dbReference type="ChEBI" id="CHEBI:195366"/>
        <dbReference type="EC" id="3.5.4.9"/>
    </reaction>
</comment>
<comment type="pathway">
    <text evidence="1">One-carbon metabolism; tetrahydrofolate interconversion.</text>
</comment>
<comment type="subunit">
    <text evidence="1">Homodimer.</text>
</comment>
<comment type="similarity">
    <text evidence="1">Belongs to the tetrahydrofolate dehydrogenase/cyclohydrolase family.</text>
</comment>
<gene>
    <name evidence="1" type="primary">folD1</name>
    <name type="ordered locus">DSY0607</name>
</gene>
<sequence>MTQILNAKPVVQAMKENLRQEVAALQAEGKAPTLGIIRVGSRPDDVYYENNIIKNCETIGIATKTYPLDLNISMEEFTAVMTQVNDDPSVHGIMLFRPLPPQLDEEVIKHLISADKDIDCMSPLNLEKVFEGDMSGLLPCTPAAVMAILRHYEIELKGANAVVMGRSLVVGKPLSMMLLQDNATVTICHSRTRNLPEVAKNADIVIAAMGRARMIDDNYVAENSIVIDVGINDAGDGKICGDVDYDAVVDKVKAITPVPGGVGSVTTTILLNNLVRACKSQ</sequence>
<accession>Q24ZZ6</accession>
<evidence type="ECO:0000255" key="1">
    <source>
        <dbReference type="HAMAP-Rule" id="MF_01576"/>
    </source>
</evidence>
<reference key="1">
    <citation type="journal article" date="2006" name="J. Bacteriol.">
        <title>Complete genome sequence of the dehalorespiring bacterium Desulfitobacterium hafniense Y51 and comparison with Dehalococcoides ethenogenes 195.</title>
        <authorList>
            <person name="Nonaka H."/>
            <person name="Keresztes G."/>
            <person name="Shinoda Y."/>
            <person name="Ikenaga Y."/>
            <person name="Abe M."/>
            <person name="Naito K."/>
            <person name="Inatomi K."/>
            <person name="Furukawa K."/>
            <person name="Inui M."/>
            <person name="Yukawa H."/>
        </authorList>
    </citation>
    <scope>NUCLEOTIDE SEQUENCE [LARGE SCALE GENOMIC DNA]</scope>
    <source>
        <strain>Y51</strain>
    </source>
</reference>
<feature type="chain" id="PRO_0000268335" description="Bifunctional protein FolD 1">
    <location>
        <begin position="1"/>
        <end position="281"/>
    </location>
</feature>
<feature type="binding site" evidence="1">
    <location>
        <begin position="165"/>
        <end position="167"/>
    </location>
    <ligand>
        <name>NADP(+)</name>
        <dbReference type="ChEBI" id="CHEBI:58349"/>
    </ligand>
</feature>
<feature type="binding site" evidence="1">
    <location>
        <position position="190"/>
    </location>
    <ligand>
        <name>NADP(+)</name>
        <dbReference type="ChEBI" id="CHEBI:58349"/>
    </ligand>
</feature>
<feature type="binding site" evidence="1">
    <location>
        <position position="231"/>
    </location>
    <ligand>
        <name>NADP(+)</name>
        <dbReference type="ChEBI" id="CHEBI:58349"/>
    </ligand>
</feature>
<organism>
    <name type="scientific">Desulfitobacterium hafniense (strain Y51)</name>
    <dbReference type="NCBI Taxonomy" id="138119"/>
    <lineage>
        <taxon>Bacteria</taxon>
        <taxon>Bacillati</taxon>
        <taxon>Bacillota</taxon>
        <taxon>Clostridia</taxon>
        <taxon>Eubacteriales</taxon>
        <taxon>Desulfitobacteriaceae</taxon>
        <taxon>Desulfitobacterium</taxon>
    </lineage>
</organism>
<proteinExistence type="inferred from homology"/>
<dbReference type="EC" id="1.5.1.5" evidence="1"/>
<dbReference type="EC" id="3.5.4.9" evidence="1"/>
<dbReference type="EMBL" id="AP008230">
    <property type="protein sequence ID" value="BAE82396.1"/>
    <property type="molecule type" value="Genomic_DNA"/>
</dbReference>
<dbReference type="RefSeq" id="WP_005809876.1">
    <property type="nucleotide sequence ID" value="NC_007907.1"/>
</dbReference>
<dbReference type="SMR" id="Q24ZZ6"/>
<dbReference type="STRING" id="138119.DSY0607"/>
<dbReference type="KEGG" id="dsy:DSY0607"/>
<dbReference type="eggNOG" id="COG0190">
    <property type="taxonomic scope" value="Bacteria"/>
</dbReference>
<dbReference type="HOGENOM" id="CLU_034045_2_1_9"/>
<dbReference type="UniPathway" id="UPA00193"/>
<dbReference type="Proteomes" id="UP000001946">
    <property type="component" value="Chromosome"/>
</dbReference>
<dbReference type="GO" id="GO:0005829">
    <property type="term" value="C:cytosol"/>
    <property type="evidence" value="ECO:0007669"/>
    <property type="project" value="TreeGrafter"/>
</dbReference>
<dbReference type="GO" id="GO:0004477">
    <property type="term" value="F:methenyltetrahydrofolate cyclohydrolase activity"/>
    <property type="evidence" value="ECO:0007669"/>
    <property type="project" value="UniProtKB-UniRule"/>
</dbReference>
<dbReference type="GO" id="GO:0004488">
    <property type="term" value="F:methylenetetrahydrofolate dehydrogenase (NADP+) activity"/>
    <property type="evidence" value="ECO:0007669"/>
    <property type="project" value="UniProtKB-UniRule"/>
</dbReference>
<dbReference type="GO" id="GO:0000105">
    <property type="term" value="P:L-histidine biosynthetic process"/>
    <property type="evidence" value="ECO:0007669"/>
    <property type="project" value="UniProtKB-KW"/>
</dbReference>
<dbReference type="GO" id="GO:0009086">
    <property type="term" value="P:methionine biosynthetic process"/>
    <property type="evidence" value="ECO:0007669"/>
    <property type="project" value="UniProtKB-KW"/>
</dbReference>
<dbReference type="GO" id="GO:0006164">
    <property type="term" value="P:purine nucleotide biosynthetic process"/>
    <property type="evidence" value="ECO:0007669"/>
    <property type="project" value="UniProtKB-KW"/>
</dbReference>
<dbReference type="GO" id="GO:0035999">
    <property type="term" value="P:tetrahydrofolate interconversion"/>
    <property type="evidence" value="ECO:0007669"/>
    <property type="project" value="UniProtKB-UniRule"/>
</dbReference>
<dbReference type="CDD" id="cd01080">
    <property type="entry name" value="NAD_bind_m-THF_DH_Cyclohyd"/>
    <property type="match status" value="1"/>
</dbReference>
<dbReference type="FunFam" id="3.40.50.720:FF:000094">
    <property type="entry name" value="Bifunctional protein FolD"/>
    <property type="match status" value="1"/>
</dbReference>
<dbReference type="Gene3D" id="3.40.50.10860">
    <property type="entry name" value="Leucine Dehydrogenase, chain A, domain 1"/>
    <property type="match status" value="1"/>
</dbReference>
<dbReference type="Gene3D" id="3.40.50.720">
    <property type="entry name" value="NAD(P)-binding Rossmann-like Domain"/>
    <property type="match status" value="1"/>
</dbReference>
<dbReference type="HAMAP" id="MF_01576">
    <property type="entry name" value="THF_DHG_CYH"/>
    <property type="match status" value="1"/>
</dbReference>
<dbReference type="InterPro" id="IPR046346">
    <property type="entry name" value="Aminoacid_DH-like_N_sf"/>
</dbReference>
<dbReference type="InterPro" id="IPR036291">
    <property type="entry name" value="NAD(P)-bd_dom_sf"/>
</dbReference>
<dbReference type="InterPro" id="IPR000672">
    <property type="entry name" value="THF_DH/CycHdrlase"/>
</dbReference>
<dbReference type="InterPro" id="IPR020630">
    <property type="entry name" value="THF_DH/CycHdrlase_cat_dom"/>
</dbReference>
<dbReference type="InterPro" id="IPR020631">
    <property type="entry name" value="THF_DH/CycHdrlase_NAD-bd_dom"/>
</dbReference>
<dbReference type="PANTHER" id="PTHR48099:SF5">
    <property type="entry name" value="C-1-TETRAHYDROFOLATE SYNTHASE, CYTOPLASMIC"/>
    <property type="match status" value="1"/>
</dbReference>
<dbReference type="PANTHER" id="PTHR48099">
    <property type="entry name" value="C-1-TETRAHYDROFOLATE SYNTHASE, CYTOPLASMIC-RELATED"/>
    <property type="match status" value="1"/>
</dbReference>
<dbReference type="Pfam" id="PF00763">
    <property type="entry name" value="THF_DHG_CYH"/>
    <property type="match status" value="1"/>
</dbReference>
<dbReference type="Pfam" id="PF02882">
    <property type="entry name" value="THF_DHG_CYH_C"/>
    <property type="match status" value="1"/>
</dbReference>
<dbReference type="PRINTS" id="PR00085">
    <property type="entry name" value="THFDHDRGNASE"/>
</dbReference>
<dbReference type="SUPFAM" id="SSF53223">
    <property type="entry name" value="Aminoacid dehydrogenase-like, N-terminal domain"/>
    <property type="match status" value="1"/>
</dbReference>
<dbReference type="SUPFAM" id="SSF51735">
    <property type="entry name" value="NAD(P)-binding Rossmann-fold domains"/>
    <property type="match status" value="1"/>
</dbReference>
<protein>
    <recommendedName>
        <fullName evidence="1">Bifunctional protein FolD 1</fullName>
    </recommendedName>
    <domain>
        <recommendedName>
            <fullName evidence="1">Methylenetetrahydrofolate dehydrogenase</fullName>
            <ecNumber evidence="1">1.5.1.5</ecNumber>
        </recommendedName>
    </domain>
    <domain>
        <recommendedName>
            <fullName evidence="1">Methenyltetrahydrofolate cyclohydrolase</fullName>
            <ecNumber evidence="1">3.5.4.9</ecNumber>
        </recommendedName>
    </domain>
</protein>